<comment type="PTM">
    <text>Binds 1 heme c group covalently per subunit.</text>
</comment>
<organism>
    <name type="scientific">Ancylobacter novellus</name>
    <name type="common">Thiobacillus novellus</name>
    <dbReference type="NCBI Taxonomy" id="921"/>
    <lineage>
        <taxon>Bacteria</taxon>
        <taxon>Pseudomonadati</taxon>
        <taxon>Pseudomonadota</taxon>
        <taxon>Alphaproteobacteria</taxon>
        <taxon>Hyphomicrobiales</taxon>
        <taxon>Xanthobacteraceae</taxon>
        <taxon>Ancylobacter</taxon>
    </lineage>
</organism>
<name>CY550_ANCNO</name>
<accession>P23021</accession>
<proteinExistence type="evidence at protein level"/>
<keyword id="KW-0903">Direct protein sequencing</keyword>
<keyword id="KW-0249">Electron transport</keyword>
<keyword id="KW-0349">Heme</keyword>
<keyword id="KW-0408">Iron</keyword>
<keyword id="KW-0479">Metal-binding</keyword>
<keyword id="KW-0813">Transport</keyword>
<protein>
    <recommendedName>
        <fullName>Cytochrome c-550</fullName>
    </recommendedName>
    <alternativeName>
        <fullName>Cytochrome c550</fullName>
    </alternativeName>
</protein>
<sequence length="107" mass="11592">PAKGANVFWKCMACHAVGEGAKNKVGPELNGIIGRKMGSIEGFNYSDTLKEHNAKGDVWTAEILSQYLANPKGYMPGVKMVFAGLPKEIRADDLEAYLKTFNADGTK</sequence>
<dbReference type="PIR" id="JU0381">
    <property type="entry name" value="JU0381"/>
</dbReference>
<dbReference type="SMR" id="P23021"/>
<dbReference type="GO" id="GO:0009055">
    <property type="term" value="F:electron transfer activity"/>
    <property type="evidence" value="ECO:0007669"/>
    <property type="project" value="InterPro"/>
</dbReference>
<dbReference type="GO" id="GO:0020037">
    <property type="term" value="F:heme binding"/>
    <property type="evidence" value="ECO:0007669"/>
    <property type="project" value="InterPro"/>
</dbReference>
<dbReference type="GO" id="GO:0046872">
    <property type="term" value="F:metal ion binding"/>
    <property type="evidence" value="ECO:0007669"/>
    <property type="project" value="UniProtKB-KW"/>
</dbReference>
<dbReference type="Gene3D" id="1.10.760.10">
    <property type="entry name" value="Cytochrome c-like domain"/>
    <property type="match status" value="1"/>
</dbReference>
<dbReference type="InterPro" id="IPR009056">
    <property type="entry name" value="Cyt_c-like_dom"/>
</dbReference>
<dbReference type="InterPro" id="IPR036909">
    <property type="entry name" value="Cyt_c-like_dom_sf"/>
</dbReference>
<dbReference type="InterPro" id="IPR002327">
    <property type="entry name" value="Cyt_c_1A/1B"/>
</dbReference>
<dbReference type="PANTHER" id="PTHR11961">
    <property type="entry name" value="CYTOCHROME C"/>
    <property type="match status" value="1"/>
</dbReference>
<dbReference type="Pfam" id="PF00034">
    <property type="entry name" value="Cytochrom_C"/>
    <property type="match status" value="1"/>
</dbReference>
<dbReference type="PRINTS" id="PR00604">
    <property type="entry name" value="CYTCHRMECIAB"/>
</dbReference>
<dbReference type="SUPFAM" id="SSF46626">
    <property type="entry name" value="Cytochrome c"/>
    <property type="match status" value="1"/>
</dbReference>
<dbReference type="PROSITE" id="PS51007">
    <property type="entry name" value="CYTC"/>
    <property type="match status" value="1"/>
</dbReference>
<feature type="chain" id="PRO_0000108387" description="Cytochrome c-550">
    <location>
        <begin position="1" status="less than"/>
        <end position="107"/>
    </location>
</feature>
<feature type="binding site" description="covalent">
    <location>
        <position position="11"/>
    </location>
    <ligand>
        <name>heme c</name>
        <dbReference type="ChEBI" id="CHEBI:61717"/>
    </ligand>
</feature>
<feature type="binding site" description="covalent">
    <location>
        <position position="14"/>
    </location>
    <ligand>
        <name>heme c</name>
        <dbReference type="ChEBI" id="CHEBI:61717"/>
    </ligand>
</feature>
<feature type="binding site" description="axial binding residue">
    <location>
        <position position="15"/>
    </location>
    <ligand>
        <name>heme c</name>
        <dbReference type="ChEBI" id="CHEBI:61717"/>
    </ligand>
    <ligandPart>
        <name>Fe</name>
        <dbReference type="ChEBI" id="CHEBI:18248"/>
    </ligandPart>
</feature>
<feature type="binding site" description="axial binding residue">
    <location>
        <position position="80"/>
    </location>
    <ligand>
        <name>heme c</name>
        <dbReference type="ChEBI" id="CHEBI:61717"/>
    </ligand>
    <ligandPart>
        <name>Fe</name>
        <dbReference type="ChEBI" id="CHEBI:18248"/>
    </ligandPart>
</feature>
<feature type="non-terminal residue">
    <location>
        <position position="1"/>
    </location>
</feature>
<reference key="1">
    <citation type="journal article" date="1991" name="Biochim. Biophys. Acta">
        <title>Cytochromes c of Nitrobacter winogradskyi and Thiobacillus novellus: structure, function and evolution.</title>
        <authorList>
            <person name="Yamanaka T."/>
            <person name="Nagano T."/>
            <person name="Shoji K."/>
            <person name="Fukumori Y."/>
        </authorList>
    </citation>
    <scope>PROTEIN SEQUENCE</scope>
</reference>
<reference key="2">
    <citation type="journal article" date="1991" name="Viva Orig.">
        <authorList>
            <person name="Yamanaka T."/>
            <person name="Nagano T."/>
            <person name="Shoji K."/>
            <person name="Fukumori Y."/>
        </authorList>
    </citation>
    <scope>PROTEIN SEQUENCE</scope>
</reference>